<comment type="subcellular location">
    <subcellularLocation>
        <location evidence="1">Cell inner membrane</location>
        <topology evidence="1">Multi-pass membrane protein</topology>
    </subcellularLocation>
</comment>
<comment type="similarity">
    <text evidence="1">Belongs to the UPF0266 family.</text>
</comment>
<name>Y2467_YERPY</name>
<protein>
    <recommendedName>
        <fullName evidence="1">UPF0266 membrane protein YPK_2467</fullName>
    </recommendedName>
</protein>
<proteinExistence type="inferred from homology"/>
<reference key="1">
    <citation type="submission" date="2008-02" db="EMBL/GenBank/DDBJ databases">
        <title>Complete sequence of Yersinia pseudotuberculosis YPIII.</title>
        <authorList>
            <consortium name="US DOE Joint Genome Institute"/>
            <person name="Copeland A."/>
            <person name="Lucas S."/>
            <person name="Lapidus A."/>
            <person name="Glavina del Rio T."/>
            <person name="Dalin E."/>
            <person name="Tice H."/>
            <person name="Bruce D."/>
            <person name="Goodwin L."/>
            <person name="Pitluck S."/>
            <person name="Munk A.C."/>
            <person name="Brettin T."/>
            <person name="Detter J.C."/>
            <person name="Han C."/>
            <person name="Tapia R."/>
            <person name="Schmutz J."/>
            <person name="Larimer F."/>
            <person name="Land M."/>
            <person name="Hauser L."/>
            <person name="Challacombe J.F."/>
            <person name="Green L."/>
            <person name="Lindler L.E."/>
            <person name="Nikolich M.P."/>
            <person name="Richardson P."/>
        </authorList>
    </citation>
    <scope>NUCLEOTIDE SEQUENCE [LARGE SCALE GENOMIC DNA]</scope>
    <source>
        <strain>YPIII</strain>
    </source>
</reference>
<dbReference type="EMBL" id="CP000950">
    <property type="protein sequence ID" value="ACA68744.1"/>
    <property type="molecule type" value="Genomic_DNA"/>
</dbReference>
<dbReference type="RefSeq" id="WP_002211066.1">
    <property type="nucleotide sequence ID" value="NZ_CP009792.1"/>
</dbReference>
<dbReference type="KEGG" id="ypy:YPK_2467"/>
<dbReference type="PATRIC" id="fig|502800.11.peg.3156"/>
<dbReference type="GO" id="GO:0005886">
    <property type="term" value="C:plasma membrane"/>
    <property type="evidence" value="ECO:0007669"/>
    <property type="project" value="UniProtKB-SubCell"/>
</dbReference>
<dbReference type="HAMAP" id="MF_01071">
    <property type="entry name" value="UPF0266"/>
    <property type="match status" value="1"/>
</dbReference>
<dbReference type="InterPro" id="IPR009328">
    <property type="entry name" value="DUF986"/>
</dbReference>
<dbReference type="NCBIfam" id="NF002791">
    <property type="entry name" value="PRK02913.1"/>
    <property type="match status" value="1"/>
</dbReference>
<dbReference type="Pfam" id="PF06173">
    <property type="entry name" value="DUF986"/>
    <property type="match status" value="1"/>
</dbReference>
<dbReference type="PIRSF" id="PIRSF020687">
    <property type="entry name" value="UCP020687"/>
    <property type="match status" value="1"/>
</dbReference>
<evidence type="ECO:0000255" key="1">
    <source>
        <dbReference type="HAMAP-Rule" id="MF_01071"/>
    </source>
</evidence>
<sequence length="153" mass="17809">MSVTDLVLVVFIALLLIYAIYDEFIMNMMKGKTRLQVHLKRKNKLDCMIFVGLIGILIYNNVMAHGAPLTTYLLVGLALVAVYISYIRWPKLLFKNTGFFYANTFIEYSRIKSMNLSEDGILVIDLEQRRLLIQVKKLDDLEKIYNFFIENQS</sequence>
<accession>B1JP58</accession>
<keyword id="KW-0997">Cell inner membrane</keyword>
<keyword id="KW-1003">Cell membrane</keyword>
<keyword id="KW-0472">Membrane</keyword>
<keyword id="KW-0812">Transmembrane</keyword>
<keyword id="KW-1133">Transmembrane helix</keyword>
<gene>
    <name type="ordered locus">YPK_2467</name>
</gene>
<organism>
    <name type="scientific">Yersinia pseudotuberculosis serotype O:3 (strain YPIII)</name>
    <dbReference type="NCBI Taxonomy" id="502800"/>
    <lineage>
        <taxon>Bacteria</taxon>
        <taxon>Pseudomonadati</taxon>
        <taxon>Pseudomonadota</taxon>
        <taxon>Gammaproteobacteria</taxon>
        <taxon>Enterobacterales</taxon>
        <taxon>Yersiniaceae</taxon>
        <taxon>Yersinia</taxon>
    </lineage>
</organism>
<feature type="chain" id="PRO_1000136655" description="UPF0266 membrane protein YPK_2467">
    <location>
        <begin position="1"/>
        <end position="153"/>
    </location>
</feature>
<feature type="transmembrane region" description="Helical" evidence="1">
    <location>
        <begin position="6"/>
        <end position="26"/>
    </location>
</feature>
<feature type="transmembrane region" description="Helical" evidence="1">
    <location>
        <begin position="45"/>
        <end position="65"/>
    </location>
</feature>
<feature type="transmembrane region" description="Helical" evidence="1">
    <location>
        <begin position="67"/>
        <end position="87"/>
    </location>
</feature>